<gene>
    <name type="primary">CHX14</name>
    <name type="ordered locus">At1g06970</name>
    <name type="ORF">F10K1.31</name>
</gene>
<organism>
    <name type="scientific">Arabidopsis thaliana</name>
    <name type="common">Mouse-ear cress</name>
    <dbReference type="NCBI Taxonomy" id="3702"/>
    <lineage>
        <taxon>Eukaryota</taxon>
        <taxon>Viridiplantae</taxon>
        <taxon>Streptophyta</taxon>
        <taxon>Embryophyta</taxon>
        <taxon>Tracheophyta</taxon>
        <taxon>Spermatophyta</taxon>
        <taxon>Magnoliopsida</taxon>
        <taxon>eudicotyledons</taxon>
        <taxon>Gunneridae</taxon>
        <taxon>Pentapetalae</taxon>
        <taxon>rosids</taxon>
        <taxon>malvids</taxon>
        <taxon>Brassicales</taxon>
        <taxon>Brassicaceae</taxon>
        <taxon>Camelineae</taxon>
        <taxon>Arabidopsis</taxon>
    </lineage>
</organism>
<feature type="chain" id="PRO_0000394984" description="Cation/H(+) antiporter 14">
    <location>
        <begin position="1"/>
        <end position="829"/>
    </location>
</feature>
<feature type="transmembrane region" description="Helical" evidence="3">
    <location>
        <begin position="48"/>
        <end position="68"/>
    </location>
</feature>
<feature type="transmembrane region" description="Helical" evidence="3">
    <location>
        <begin position="77"/>
        <end position="97"/>
    </location>
</feature>
<feature type="transmembrane region" description="Helical" evidence="3">
    <location>
        <begin position="117"/>
        <end position="137"/>
    </location>
</feature>
<feature type="transmembrane region" description="Helical" evidence="3">
    <location>
        <begin position="145"/>
        <end position="165"/>
    </location>
</feature>
<feature type="transmembrane region" description="Helical" evidence="3">
    <location>
        <begin position="180"/>
        <end position="200"/>
    </location>
</feature>
<feature type="transmembrane region" description="Helical" evidence="3">
    <location>
        <begin position="215"/>
        <end position="235"/>
    </location>
</feature>
<feature type="transmembrane region" description="Helical" evidence="3">
    <location>
        <begin position="240"/>
        <end position="260"/>
    </location>
</feature>
<feature type="transmembrane region" description="Helical" evidence="3">
    <location>
        <begin position="281"/>
        <end position="301"/>
    </location>
</feature>
<feature type="transmembrane region" description="Helical" evidence="3">
    <location>
        <begin position="329"/>
        <end position="349"/>
    </location>
</feature>
<feature type="transmembrane region" description="Helical" evidence="3">
    <location>
        <begin position="361"/>
        <end position="383"/>
    </location>
</feature>
<feature type="transmembrane region" description="Helical" evidence="3">
    <location>
        <begin position="392"/>
        <end position="412"/>
    </location>
</feature>
<feature type="transmembrane region" description="Helical" evidence="3">
    <location>
        <begin position="425"/>
        <end position="445"/>
    </location>
</feature>
<feature type="modified residue" description="Phosphoserine" evidence="2">
    <location>
        <position position="827"/>
    </location>
</feature>
<protein>
    <recommendedName>
        <fullName>Cation/H(+) antiporter 14</fullName>
    </recommendedName>
    <alternativeName>
        <fullName>Protein CATION/H+ EXCHANGER 14</fullName>
        <shortName>AtCHX14</shortName>
    </alternativeName>
</protein>
<keyword id="KW-0050">Antiport</keyword>
<keyword id="KW-0406">Ion transport</keyword>
<keyword id="KW-0472">Membrane</keyword>
<keyword id="KW-0597">Phosphoprotein</keyword>
<keyword id="KW-0630">Potassium</keyword>
<keyword id="KW-0633">Potassium transport</keyword>
<keyword id="KW-1185">Reference proteome</keyword>
<keyword id="KW-0812">Transmembrane</keyword>
<keyword id="KW-1133">Transmembrane helix</keyword>
<keyword id="KW-0813">Transport</keyword>
<proteinExistence type="evidence at transcript level"/>
<sequence length="829" mass="92160">MSKLDLEEVNSMQRGKVHGPFLVENMVCQKNHMLTSKGVFLGSDPLKYAMPLMLLQMSVIIITSRLLYRLLKPLKQGMISAQVLAGIILGPSLFGQSSAYMQMFLPISGKITLQTLSNLGFFIHLFLLGLRIDASIIRKAGSKAILIGTASYALPFSLGNLTVLFLKNTYNLPPDVVHCISTVISLNAMTSFPVTTTVLAELNILNSDLGRLATNCSIVCEAFSWIVALVFRMFLRDGTLASVWSFVWVTALILVIFFVCRPAIIWLTERRSISIDKAGEIPFFPIIMVLLTISLTSEVLGVHAAFGAFWLGVSLPDGPPLGTGLTTKLEMFATSLMLPCFISISGLQTNFFIIGESHVKIIEAVILITYGCKFLGTAAASAYCNIQIGDAFSLALLMCCQGVIEIYTCVMWKDEKVLNTECFNLLIITLLLVTGISRFLVVCLYDPSKRYRSKSKRTILDTRQRNLQFRLLLCVYNVENVPSMVNLLEASYPSRFSPISVFTLHLVELKGRAHAVLVPHHQMNKLDPNTVQSTHIVNGFQRFEQQNQGTLMAQHFTAAAPFSSINDDICTLALDKKATLIVIPFHKQYAIDGTVDHVNPSIRNINLNVLEKAPCSVGIFIDRGETEGRRSVLMSYTWRNVAVIFIEGRDDAEALAFSMRIAEHPEVSVTMIHFRHKSSLQQNHVVDVESELAESYLINDFKNFAMSKPKISYREEIVRDGVETTQVISSLGDSFDLVVVGRDHDLESSVLYGLTDWSECPELGVIGDMFASSDFHFSVLVIHQQEGDSLAMDNSYKLPASPHRVGDPRVHPRFSVEEGFTSVDLHSNR</sequence>
<comment type="function">
    <text evidence="1">May operate as a cation/H(+) antiporter.</text>
</comment>
<comment type="subcellular location">
    <subcellularLocation>
        <location evidence="1">Membrane</location>
        <topology evidence="1">Multi-pass membrane protein</topology>
    </subcellularLocation>
</comment>
<comment type="tissue specificity">
    <text evidence="4">Preferentially expressed in pollen but also detected in vegetative tissues like leaf trichomes and root vascular tissues.</text>
</comment>
<comment type="similarity">
    <text evidence="5">Belongs to the monovalent cation:proton antiporter 2 (CPA2) transporter (TC 2.A.37) family. CHX (TC 2.A.37.4) subfamily.</text>
</comment>
<evidence type="ECO:0000250" key="1"/>
<evidence type="ECO:0000250" key="2">
    <source>
        <dbReference type="UniProtKB" id="Q9SUQ7"/>
    </source>
</evidence>
<evidence type="ECO:0000255" key="3"/>
<evidence type="ECO:0000269" key="4">
    <source>
    </source>
</evidence>
<evidence type="ECO:0000305" key="5"/>
<reference key="1">
    <citation type="journal article" date="2008" name="Plant Physiol.">
        <title>AtCHX13 is a plasma membrane K+ transporter.</title>
        <authorList>
            <person name="Zhao J."/>
            <person name="Cheng N.-H."/>
            <person name="Motes C.M."/>
            <person name="Blancaflor E.B."/>
            <person name="Moore M."/>
            <person name="Gonzales N."/>
            <person name="Padmanaban S."/>
            <person name="Sze H."/>
            <person name="Ward J.M."/>
            <person name="Hirschi K.D."/>
        </authorList>
    </citation>
    <scope>NUCLEOTIDE SEQUENCE [MRNA]</scope>
</reference>
<reference key="2">
    <citation type="journal article" date="2000" name="Nature">
        <title>Sequence and analysis of chromosome 1 of the plant Arabidopsis thaliana.</title>
        <authorList>
            <person name="Theologis A."/>
            <person name="Ecker J.R."/>
            <person name="Palm C.J."/>
            <person name="Federspiel N.A."/>
            <person name="Kaul S."/>
            <person name="White O."/>
            <person name="Alonso J."/>
            <person name="Altafi H."/>
            <person name="Araujo R."/>
            <person name="Bowman C.L."/>
            <person name="Brooks S.Y."/>
            <person name="Buehler E."/>
            <person name="Chan A."/>
            <person name="Chao Q."/>
            <person name="Chen H."/>
            <person name="Cheuk R.F."/>
            <person name="Chin C.W."/>
            <person name="Chung M.K."/>
            <person name="Conn L."/>
            <person name="Conway A.B."/>
            <person name="Conway A.R."/>
            <person name="Creasy T.H."/>
            <person name="Dewar K."/>
            <person name="Dunn P."/>
            <person name="Etgu P."/>
            <person name="Feldblyum T.V."/>
            <person name="Feng J.-D."/>
            <person name="Fong B."/>
            <person name="Fujii C.Y."/>
            <person name="Gill J.E."/>
            <person name="Goldsmith A.D."/>
            <person name="Haas B."/>
            <person name="Hansen N.F."/>
            <person name="Hughes B."/>
            <person name="Huizar L."/>
            <person name="Hunter J.L."/>
            <person name="Jenkins J."/>
            <person name="Johnson-Hopson C."/>
            <person name="Khan S."/>
            <person name="Khaykin E."/>
            <person name="Kim C.J."/>
            <person name="Koo H.L."/>
            <person name="Kremenetskaia I."/>
            <person name="Kurtz D.B."/>
            <person name="Kwan A."/>
            <person name="Lam B."/>
            <person name="Langin-Hooper S."/>
            <person name="Lee A."/>
            <person name="Lee J.M."/>
            <person name="Lenz C.A."/>
            <person name="Li J.H."/>
            <person name="Li Y.-P."/>
            <person name="Lin X."/>
            <person name="Liu S.X."/>
            <person name="Liu Z.A."/>
            <person name="Luros J.S."/>
            <person name="Maiti R."/>
            <person name="Marziali A."/>
            <person name="Militscher J."/>
            <person name="Miranda M."/>
            <person name="Nguyen M."/>
            <person name="Nierman W.C."/>
            <person name="Osborne B.I."/>
            <person name="Pai G."/>
            <person name="Peterson J."/>
            <person name="Pham P.K."/>
            <person name="Rizzo M."/>
            <person name="Rooney T."/>
            <person name="Rowley D."/>
            <person name="Sakano H."/>
            <person name="Salzberg S.L."/>
            <person name="Schwartz J.R."/>
            <person name="Shinn P."/>
            <person name="Southwick A.M."/>
            <person name="Sun H."/>
            <person name="Tallon L.J."/>
            <person name="Tambunga G."/>
            <person name="Toriumi M.J."/>
            <person name="Town C.D."/>
            <person name="Utterback T."/>
            <person name="Van Aken S."/>
            <person name="Vaysberg M."/>
            <person name="Vysotskaia V.S."/>
            <person name="Walker M."/>
            <person name="Wu D."/>
            <person name="Yu G."/>
            <person name="Fraser C.M."/>
            <person name="Venter J.C."/>
            <person name="Davis R.W."/>
        </authorList>
    </citation>
    <scope>NUCLEOTIDE SEQUENCE [LARGE SCALE GENOMIC DNA]</scope>
    <source>
        <strain>cv. Columbia</strain>
    </source>
</reference>
<reference key="3">
    <citation type="journal article" date="2017" name="Plant J.">
        <title>Araport11: a complete reannotation of the Arabidopsis thaliana reference genome.</title>
        <authorList>
            <person name="Cheng C.Y."/>
            <person name="Krishnakumar V."/>
            <person name="Chan A.P."/>
            <person name="Thibaud-Nissen F."/>
            <person name="Schobel S."/>
            <person name="Town C.D."/>
        </authorList>
    </citation>
    <scope>GENOME REANNOTATION</scope>
    <source>
        <strain>cv. Columbia</strain>
    </source>
</reference>
<reference key="4">
    <citation type="journal article" date="2006" name="Plant Biotechnol. J.">
        <title>Simultaneous high-throughput recombinational cloning of open reading frames in closed and open configurations.</title>
        <authorList>
            <person name="Underwood B.A."/>
            <person name="Vanderhaeghen R."/>
            <person name="Whitford R."/>
            <person name="Town C.D."/>
            <person name="Hilson P."/>
        </authorList>
    </citation>
    <scope>NUCLEOTIDE SEQUENCE [LARGE SCALE MRNA]</scope>
    <source>
        <strain>cv. Columbia</strain>
    </source>
</reference>
<reference key="5">
    <citation type="journal article" date="2001" name="Plant Physiol.">
        <title>Phylogenetic relationships within cation transporter families of Arabidopsis.</title>
        <authorList>
            <person name="Maeser P."/>
            <person name="Thomine S."/>
            <person name="Schroeder J.I."/>
            <person name="Ward J.M."/>
            <person name="Hirschi K."/>
            <person name="Sze H."/>
            <person name="Talke I.N."/>
            <person name="Amtmann A."/>
            <person name="Maathuis F.J.M."/>
            <person name="Sanders D."/>
            <person name="Harper J.F."/>
            <person name="Tchieu J."/>
            <person name="Gribskov M."/>
            <person name="Persans M.W."/>
            <person name="Salt D.E."/>
            <person name="Kim S.A."/>
            <person name="Guerinot M.L."/>
        </authorList>
    </citation>
    <scope>GENE FAMILY</scope>
    <scope>NOMENCLATURE</scope>
</reference>
<reference key="6">
    <citation type="journal article" date="2004" name="Plant Physiol.">
        <title>Expression patterns of a novel AtCHX gene family highlight potential roles in osmotic adjustment and K+ homeostasis in pollen development.</title>
        <authorList>
            <person name="Sze H."/>
            <person name="Padmanaban S."/>
            <person name="Cellier F."/>
            <person name="Honys D."/>
            <person name="Cheng N.-H."/>
            <person name="Bock K.W."/>
            <person name="Conejero G."/>
            <person name="Li X."/>
            <person name="Twell D."/>
            <person name="Ward J.M."/>
            <person name="Hirschi K.D."/>
        </authorList>
    </citation>
    <scope>TISSUE SPECIFICITY</scope>
    <scope>GENE FAMILY</scope>
    <scope>NOMENCLATURE</scope>
</reference>
<name>CHX14_ARATH</name>
<accession>Q9LMJ1</accession>
<dbReference type="EMBL" id="EF571900">
    <property type="protein sequence ID" value="ABS19937.1"/>
    <property type="molecule type" value="mRNA"/>
</dbReference>
<dbReference type="EMBL" id="AC067971">
    <property type="protein sequence ID" value="AAF82222.1"/>
    <property type="molecule type" value="Genomic_DNA"/>
</dbReference>
<dbReference type="EMBL" id="CP002684">
    <property type="protein sequence ID" value="AEE28061.1"/>
    <property type="molecule type" value="Genomic_DNA"/>
</dbReference>
<dbReference type="EMBL" id="DQ446234">
    <property type="protein sequence ID" value="ABE65605.1"/>
    <property type="molecule type" value="mRNA"/>
</dbReference>
<dbReference type="PIR" id="D86204">
    <property type="entry name" value="D86204"/>
</dbReference>
<dbReference type="RefSeq" id="NP_172178.1">
    <property type="nucleotide sequence ID" value="NM_100570.2"/>
</dbReference>
<dbReference type="SMR" id="Q9LMJ1"/>
<dbReference type="FunCoup" id="Q9LMJ1">
    <property type="interactions" value="4"/>
</dbReference>
<dbReference type="STRING" id="3702.Q9LMJ1"/>
<dbReference type="iPTMnet" id="Q9LMJ1"/>
<dbReference type="PaxDb" id="3702-AT1G06970.1"/>
<dbReference type="ProteomicsDB" id="246839"/>
<dbReference type="EnsemblPlants" id="AT1G06970.1">
    <property type="protein sequence ID" value="AT1G06970.1"/>
    <property type="gene ID" value="AT1G06970"/>
</dbReference>
<dbReference type="GeneID" id="837207"/>
<dbReference type="Gramene" id="AT1G06970.1">
    <property type="protein sequence ID" value="AT1G06970.1"/>
    <property type="gene ID" value="AT1G06970"/>
</dbReference>
<dbReference type="KEGG" id="ath:AT1G06970"/>
<dbReference type="Araport" id="AT1G06970"/>
<dbReference type="TAIR" id="AT1G06970">
    <property type="gene designation" value="CHX14"/>
</dbReference>
<dbReference type="eggNOG" id="KOG1650">
    <property type="taxonomic scope" value="Eukaryota"/>
</dbReference>
<dbReference type="HOGENOM" id="CLU_005126_6_1_1"/>
<dbReference type="InParanoid" id="Q9LMJ1"/>
<dbReference type="OMA" id="FKMGVQI"/>
<dbReference type="PhylomeDB" id="Q9LMJ1"/>
<dbReference type="PRO" id="PR:Q9LMJ1"/>
<dbReference type="Proteomes" id="UP000006548">
    <property type="component" value="Chromosome 1"/>
</dbReference>
<dbReference type="ExpressionAtlas" id="Q9LMJ1">
    <property type="expression patterns" value="baseline and differential"/>
</dbReference>
<dbReference type="GO" id="GO:0016020">
    <property type="term" value="C:membrane"/>
    <property type="evidence" value="ECO:0007669"/>
    <property type="project" value="UniProtKB-SubCell"/>
</dbReference>
<dbReference type="GO" id="GO:0015297">
    <property type="term" value="F:antiporter activity"/>
    <property type="evidence" value="ECO:0007669"/>
    <property type="project" value="UniProtKB-KW"/>
</dbReference>
<dbReference type="GO" id="GO:0006813">
    <property type="term" value="P:potassium ion transport"/>
    <property type="evidence" value="ECO:0007669"/>
    <property type="project" value="UniProtKB-KW"/>
</dbReference>
<dbReference type="GO" id="GO:1902600">
    <property type="term" value="P:proton transmembrane transport"/>
    <property type="evidence" value="ECO:0007669"/>
    <property type="project" value="InterPro"/>
</dbReference>
<dbReference type="FunFam" id="1.20.1530.20:FF:000042">
    <property type="entry name" value="Cation/H(+) antiporter 14"/>
    <property type="match status" value="1"/>
</dbReference>
<dbReference type="Gene3D" id="1.20.1530.20">
    <property type="match status" value="1"/>
</dbReference>
<dbReference type="Gene3D" id="3.40.50.12370">
    <property type="match status" value="1"/>
</dbReference>
<dbReference type="InterPro" id="IPR006153">
    <property type="entry name" value="Cation/H_exchanger_TM"/>
</dbReference>
<dbReference type="InterPro" id="IPR050794">
    <property type="entry name" value="CPA2_transporter"/>
</dbReference>
<dbReference type="InterPro" id="IPR038770">
    <property type="entry name" value="Na+/solute_symporter_sf"/>
</dbReference>
<dbReference type="PANTHER" id="PTHR32468">
    <property type="entry name" value="CATION/H + ANTIPORTER"/>
    <property type="match status" value="1"/>
</dbReference>
<dbReference type="PANTHER" id="PTHR32468:SF23">
    <property type="entry name" value="CATION_H(+) ANTIPORTER 14"/>
    <property type="match status" value="1"/>
</dbReference>
<dbReference type="Pfam" id="PF23256">
    <property type="entry name" value="CHX17_2nd"/>
    <property type="match status" value="1"/>
</dbReference>
<dbReference type="Pfam" id="PF23259">
    <property type="entry name" value="CHX17_C"/>
    <property type="match status" value="1"/>
</dbReference>
<dbReference type="Pfam" id="PF00999">
    <property type="entry name" value="Na_H_Exchanger"/>
    <property type="match status" value="1"/>
</dbReference>